<proteinExistence type="evidence at protein level"/>
<protein>
    <recommendedName>
        <fullName evidence="7">Protein CYSTEINE-RICH TRANSMEMBRANE MODULE 2</fullName>
        <shortName evidence="7">AthCYSTM2</shortName>
    </recommendedName>
    <alternativeName>
        <fullName evidence="6">Protein CADMIUM TOLERANCE 1</fullName>
        <shortName evidence="6">AtCDT1</shortName>
        <shortName evidence="6">Cd tolerant 1</shortName>
    </alternativeName>
</protein>
<comment type="function">
    <molecule>Isoform 1</molecule>
    <text evidence="7">Involved in resistance to abiotic stress.</text>
</comment>
<comment type="function">
    <molecule>Isoform 2</molecule>
    <text evidence="3">Confers resistance to heavy metal ions (e.g. cadmium (CdCl(2)) and copper (CuCl(2))) by chelating them at the plasma membrane of root cells, thus stopping their entry and reducing their accumulation.</text>
</comment>
<comment type="subunit">
    <text evidence="4">Heterodimers (PubMed:29272523). Binds weakly to CYSTM7 and WIH1/CYSTM13 (PubMed:29272523).</text>
</comment>
<comment type="subcellular location">
    <molecule>Isoform 1</molecule>
    <subcellularLocation>
        <location evidence="4">Cell membrane</location>
        <topology evidence="2">Single-pass membrane protein</topology>
    </subcellularLocation>
    <subcellularLocation>
        <location evidence="4">Nucleus</location>
    </subcellularLocation>
</comment>
<comment type="subcellular location">
    <molecule>Isoform 2</molecule>
    <subcellularLocation>
        <location evidence="1">Cell membrane</location>
        <topology evidence="2">Single-pass membrane protein</topology>
    </subcellularLocation>
    <subcellularLocation>
        <location evidence="1">Secreted</location>
        <location evidence="1">Cell wall</location>
    </subcellularLocation>
</comment>
<comment type="alternative products">
    <event type="alternative promoter"/>
    <isoform>
        <id>Q3ECR7-1</id>
        <name>1</name>
        <name evidence="7">CYSTM2</name>
        <sequence type="displayed"/>
    </isoform>
    <isoform>
        <id>Q3ECR7-2</id>
        <name>2</name>
        <name evidence="5">CDT1</name>
        <sequence type="described" ref="VSP_061394 VSP_061395"/>
    </isoform>
</comment>
<comment type="tissue specificity">
    <molecule>Isoform 1</molecule>
    <text evidence="4">Mostly expressed in stems, siliques, leaves and flowers and, to a lower extent, in roots.</text>
</comment>
<comment type="induction">
    <molecule>Isoform 1</molecule>
    <text evidence="4">Induced by salt, cold and drought.</text>
</comment>
<comment type="similarity">
    <text evidence="8">Belongs to the CYSTM1 family.</text>
</comment>
<evidence type="ECO:0000250" key="1">
    <source>
        <dbReference type="UniProtKB" id="Q5VSB5"/>
    </source>
</evidence>
<evidence type="ECO:0000255" key="2"/>
<evidence type="ECO:0000269" key="3">
    <source>
    </source>
</evidence>
<evidence type="ECO:0000269" key="4">
    <source>
    </source>
</evidence>
<evidence type="ECO:0000303" key="5">
    <source>
    </source>
</evidence>
<evidence type="ECO:0000303" key="6">
    <source>
    </source>
</evidence>
<evidence type="ECO:0000303" key="7">
    <source>
    </source>
</evidence>
<evidence type="ECO:0000305" key="8"/>
<evidence type="ECO:0000305" key="9">
    <source>
    </source>
</evidence>
<evidence type="ECO:0000312" key="10">
    <source>
        <dbReference type="Araport" id="AT1G52827"/>
    </source>
</evidence>
<evidence type="ECO:0000312" key="11">
    <source>
        <dbReference type="EMBL" id="AC019018"/>
    </source>
</evidence>
<gene>
    <name evidence="7" type="primary">CYSTM2</name>
    <name evidence="6" type="synonym">CDT1</name>
    <name evidence="10" type="ordered locus">At1g52827</name>
    <name evidence="11" type="ORF">F14G24</name>
</gene>
<organism>
    <name type="scientific">Arabidopsis thaliana</name>
    <name type="common">Mouse-ear cress</name>
    <dbReference type="NCBI Taxonomy" id="3702"/>
    <lineage>
        <taxon>Eukaryota</taxon>
        <taxon>Viridiplantae</taxon>
        <taxon>Streptophyta</taxon>
        <taxon>Embryophyta</taxon>
        <taxon>Tracheophyta</taxon>
        <taxon>Spermatophyta</taxon>
        <taxon>Magnoliopsida</taxon>
        <taxon>eudicotyledons</taxon>
        <taxon>Gunneridae</taxon>
        <taxon>Pentapetalae</taxon>
        <taxon>rosids</taxon>
        <taxon>malvids</taxon>
        <taxon>Brassicales</taxon>
        <taxon>Brassicaceae</taxon>
        <taxon>Camelineae</taxon>
        <taxon>Arabidopsis</taxon>
    </lineage>
</organism>
<feature type="chain" id="PRO_0000454799" description="Protein CYSTEINE-RICH TRANSMEMBRANE MODULE 2">
    <location>
        <begin position="1"/>
        <end position="62"/>
    </location>
</feature>
<feature type="transmembrane region" description="Helical" evidence="2">
    <location>
        <begin position="33"/>
        <end position="53"/>
    </location>
</feature>
<feature type="splice variant" id="VSP_061394" description="In isoform 2." evidence="9">
    <original>MTMSRNGKTNKAAYSQRFTRCSVAVAATRSASVVAAAFDFYICIIISTL</original>
    <variation>MKAPPQQEMTYYDNVKKRQDEQGCLFATFYALFCCCCCYEKCKCCCCCV</variation>
    <location>
        <begin position="1"/>
        <end position="49"/>
    </location>
</feature>
<feature type="splice variant" id="VSP_061395" description="In isoform 2." evidence="9">
    <location>
        <begin position="50"/>
        <end position="62"/>
    </location>
</feature>
<feature type="transmembrane region" description="Helical" evidence="2">
    <location sequence="Q3ECR7-2">
        <begin position="23"/>
        <end position="39"/>
    </location>
</feature>
<name>CSTM2_ARATH</name>
<accession>Q3ECR7</accession>
<accession>F4IEL4</accession>
<sequence length="62" mass="6680">MTMSRNGKTNKAAYSQRFTRCSVAVAATRSASVVAAAFDFYICIIISTLLSLIVSLASQLLF</sequence>
<keyword id="KW-0877">Alternative promoter usage</keyword>
<keyword id="KW-1003">Cell membrane</keyword>
<keyword id="KW-0134">Cell wall</keyword>
<keyword id="KW-0472">Membrane</keyword>
<keyword id="KW-0479">Metal-binding</keyword>
<keyword id="KW-0539">Nucleus</keyword>
<keyword id="KW-1185">Reference proteome</keyword>
<keyword id="KW-0964">Secreted</keyword>
<keyword id="KW-0346">Stress response</keyword>
<keyword id="KW-0812">Transmembrane</keyword>
<keyword id="KW-1133">Transmembrane helix</keyword>
<reference key="1">
    <citation type="journal article" date="2000" name="Nature">
        <title>Sequence and analysis of chromosome 1 of the plant Arabidopsis thaliana.</title>
        <authorList>
            <person name="Theologis A."/>
            <person name="Ecker J.R."/>
            <person name="Palm C.J."/>
            <person name="Federspiel N.A."/>
            <person name="Kaul S."/>
            <person name="White O."/>
            <person name="Alonso J."/>
            <person name="Altafi H."/>
            <person name="Araujo R."/>
            <person name="Bowman C.L."/>
            <person name="Brooks S.Y."/>
            <person name="Buehler E."/>
            <person name="Chan A."/>
            <person name="Chao Q."/>
            <person name="Chen H."/>
            <person name="Cheuk R.F."/>
            <person name="Chin C.W."/>
            <person name="Chung M.K."/>
            <person name="Conn L."/>
            <person name="Conway A.B."/>
            <person name="Conway A.R."/>
            <person name="Creasy T.H."/>
            <person name="Dewar K."/>
            <person name="Dunn P."/>
            <person name="Etgu P."/>
            <person name="Feldblyum T.V."/>
            <person name="Feng J.-D."/>
            <person name="Fong B."/>
            <person name="Fujii C.Y."/>
            <person name="Gill J.E."/>
            <person name="Goldsmith A.D."/>
            <person name="Haas B."/>
            <person name="Hansen N.F."/>
            <person name="Hughes B."/>
            <person name="Huizar L."/>
            <person name="Hunter J.L."/>
            <person name="Jenkins J."/>
            <person name="Johnson-Hopson C."/>
            <person name="Khan S."/>
            <person name="Khaykin E."/>
            <person name="Kim C.J."/>
            <person name="Koo H.L."/>
            <person name="Kremenetskaia I."/>
            <person name="Kurtz D.B."/>
            <person name="Kwan A."/>
            <person name="Lam B."/>
            <person name="Langin-Hooper S."/>
            <person name="Lee A."/>
            <person name="Lee J.M."/>
            <person name="Lenz C.A."/>
            <person name="Li J.H."/>
            <person name="Li Y.-P."/>
            <person name="Lin X."/>
            <person name="Liu S.X."/>
            <person name="Liu Z.A."/>
            <person name="Luros J.S."/>
            <person name="Maiti R."/>
            <person name="Marziali A."/>
            <person name="Militscher J."/>
            <person name="Miranda M."/>
            <person name="Nguyen M."/>
            <person name="Nierman W.C."/>
            <person name="Osborne B.I."/>
            <person name="Pai G."/>
            <person name="Peterson J."/>
            <person name="Pham P.K."/>
            <person name="Rizzo M."/>
            <person name="Rooney T."/>
            <person name="Rowley D."/>
            <person name="Sakano H."/>
            <person name="Salzberg S.L."/>
            <person name="Schwartz J.R."/>
            <person name="Shinn P."/>
            <person name="Southwick A.M."/>
            <person name="Sun H."/>
            <person name="Tallon L.J."/>
            <person name="Tambunga G."/>
            <person name="Toriumi M.J."/>
            <person name="Town C.D."/>
            <person name="Utterback T."/>
            <person name="Van Aken S."/>
            <person name="Vaysberg M."/>
            <person name="Vysotskaia V.S."/>
            <person name="Walker M."/>
            <person name="Wu D."/>
            <person name="Yu G."/>
            <person name="Fraser C.M."/>
            <person name="Venter J.C."/>
            <person name="Davis R.W."/>
        </authorList>
    </citation>
    <scope>NUCLEOTIDE SEQUENCE [LARGE SCALE GENOMIC DNA]</scope>
    <source>
        <strain>cv. Columbia</strain>
    </source>
</reference>
<reference key="2">
    <citation type="journal article" date="2017" name="Plant J.">
        <title>Araport11: a complete reannotation of the Arabidopsis thaliana reference genome.</title>
        <authorList>
            <person name="Cheng C.Y."/>
            <person name="Krishnakumar V."/>
            <person name="Chan A.P."/>
            <person name="Thibaud-Nissen F."/>
            <person name="Schobel S."/>
            <person name="Town C.D."/>
        </authorList>
    </citation>
    <scope>GENOME REANNOTATION</scope>
    <source>
        <strain>cv. Columbia</strain>
    </source>
</reference>
<reference key="3">
    <citation type="submission" date="2006-06" db="EMBL/GenBank/DDBJ databases">
        <title>Arabidopsis ORF clones.</title>
        <authorList>
            <person name="Shinn P."/>
            <person name="Chen H."/>
            <person name="Kim C.J."/>
            <person name="Quinitio C."/>
            <person name="Ecker J.R."/>
        </authorList>
    </citation>
    <scope>NUCLEOTIDE SEQUENCE [LARGE SCALE MRNA]</scope>
    <source>
        <strain>cv. Columbia</strain>
    </source>
</reference>
<reference key="4">
    <citation type="journal article" date="2009" name="Plant Cell Physiol.">
        <title>Novel cysteine-rich peptides from Digitaria ciliaris and Oryza sativa enhance tolerance to cadmium by limiting its cellular accumulation.</title>
        <authorList>
            <person name="Kuramata M."/>
            <person name="Masuya S."/>
            <person name="Takahashi Y."/>
            <person name="Kitagawa E."/>
            <person name="Inoue C."/>
            <person name="Ishikawa S."/>
            <person name="Youssefian S."/>
            <person name="Kusano T."/>
        </authorList>
    </citation>
    <scope>GENE FAMILY</scope>
    <scope>NOMENCLATURE</scope>
    <source>
        <strain>cv. Columbia</strain>
    </source>
</reference>
<reference key="5">
    <citation type="journal article" date="2009" name="Plant Signal. Behav.">
        <title>A novel plant cysteine-rich peptide family conferring cadmium tolerance to yeast and plants.</title>
        <authorList>
            <person name="Matsuda T."/>
            <person name="Kuramata M."/>
            <person name="Takahashi Y."/>
            <person name="Kitagawa E."/>
            <person name="Youssefian S."/>
            <person name="Kusano T."/>
        </authorList>
    </citation>
    <scope>FUNCTION</scope>
    <scope>GENE FAMILY</scope>
</reference>
<reference key="6">
    <citation type="journal article" date="2018" name="Plant Cell Physiol.">
        <title>CYSTM, a novel non-secreted cysteine-rich peptide family, involved in environmental stresses in Arabidopsis thaliana.</title>
        <authorList>
            <person name="Xu Y."/>
            <person name="Yu Z."/>
            <person name="Zhang D."/>
            <person name="Huang J."/>
            <person name="Wu C."/>
            <person name="Yang G."/>
            <person name="Yan K."/>
            <person name="Zhang S."/>
            <person name="Zheng C."/>
        </authorList>
    </citation>
    <scope>FUNCTION</scope>
    <scope>INTERACTION WITH CYSTM7 AND WIH1/CYSTM13</scope>
    <scope>TISSUE SPECIFICITY</scope>
    <scope>INDUCTION BY SALT; COLD AND DROUGHT</scope>
    <scope>SUBCELLULAR LOCATION</scope>
    <source>
        <strain>cv. Columbia</strain>
    </source>
</reference>
<dbReference type="EMBL" id="AC019018">
    <property type="status" value="NOT_ANNOTATED_CDS"/>
    <property type="molecule type" value="Genomic_DNA"/>
</dbReference>
<dbReference type="EMBL" id="CP002684">
    <property type="protein sequence ID" value="AEE32857.2"/>
    <property type="molecule type" value="Genomic_DNA"/>
</dbReference>
<dbReference type="EMBL" id="BT025630">
    <property type="protein sequence ID" value="ABF74691.1"/>
    <property type="molecule type" value="mRNA"/>
</dbReference>
<dbReference type="RefSeq" id="NP_974010.3">
    <molecule id="Q3ECR7-1"/>
    <property type="nucleotide sequence ID" value="NM_202281.4"/>
</dbReference>
<dbReference type="FunCoup" id="Q3ECR7">
    <property type="interactions" value="8"/>
</dbReference>
<dbReference type="STRING" id="3702.Q3ECR7"/>
<dbReference type="EnsemblPlants" id="AT1G52827.1">
    <molecule id="Q3ECR7-1"/>
    <property type="protein sequence ID" value="AT1G52827.1"/>
    <property type="gene ID" value="AT1G52827"/>
</dbReference>
<dbReference type="GeneID" id="2745823"/>
<dbReference type="Gramene" id="AT1G52827.1">
    <molecule id="Q3ECR7-1"/>
    <property type="protein sequence ID" value="AT1G52827.1"/>
    <property type="gene ID" value="AT1G52827"/>
</dbReference>
<dbReference type="KEGG" id="ath:AT1G52827"/>
<dbReference type="Araport" id="AT1G52827"/>
<dbReference type="TAIR" id="AT1G52827">
    <property type="gene designation" value="CDT1"/>
</dbReference>
<dbReference type="InParanoid" id="Q3ECR7"/>
<dbReference type="OMA" id="FDFYICI"/>
<dbReference type="PRO" id="PR:Q3ECR7"/>
<dbReference type="Proteomes" id="UP000006548">
    <property type="component" value="Chromosome 1"/>
</dbReference>
<dbReference type="ExpressionAtlas" id="Q3ECR7">
    <property type="expression patterns" value="baseline and differential"/>
</dbReference>
<dbReference type="GO" id="GO:0005737">
    <property type="term" value="C:cytoplasm"/>
    <property type="evidence" value="ECO:0000314"/>
    <property type="project" value="TAIR"/>
</dbReference>
<dbReference type="GO" id="GO:0005576">
    <property type="term" value="C:extracellular region"/>
    <property type="evidence" value="ECO:0007669"/>
    <property type="project" value="UniProtKB-KW"/>
</dbReference>
<dbReference type="GO" id="GO:0005634">
    <property type="term" value="C:nucleus"/>
    <property type="evidence" value="ECO:0000314"/>
    <property type="project" value="UniProtKB"/>
</dbReference>
<dbReference type="GO" id="GO:0009505">
    <property type="term" value="C:plant-type cell wall"/>
    <property type="evidence" value="ECO:0000250"/>
    <property type="project" value="UniProtKB"/>
</dbReference>
<dbReference type="GO" id="GO:0005886">
    <property type="term" value="C:plasma membrane"/>
    <property type="evidence" value="ECO:0000314"/>
    <property type="project" value="UniProtKB"/>
</dbReference>
<dbReference type="GO" id="GO:0046872">
    <property type="term" value="F:metal ion binding"/>
    <property type="evidence" value="ECO:0000250"/>
    <property type="project" value="UniProtKB"/>
</dbReference>
<dbReference type="GO" id="GO:0140487">
    <property type="term" value="F:metal ion sequestering activity"/>
    <property type="evidence" value="ECO:0000250"/>
    <property type="project" value="UniProtKB"/>
</dbReference>
<dbReference type="GO" id="GO:1990748">
    <property type="term" value="P:cellular detoxification"/>
    <property type="evidence" value="ECO:0000250"/>
    <property type="project" value="UniProtKB"/>
</dbReference>
<dbReference type="GO" id="GO:0071585">
    <property type="term" value="P:detoxification of cadmium ion"/>
    <property type="evidence" value="ECO:0000314"/>
    <property type="project" value="TAIR"/>
</dbReference>
<dbReference type="GO" id="GO:0010273">
    <property type="term" value="P:detoxification of copper ion"/>
    <property type="evidence" value="ECO:0000250"/>
    <property type="project" value="UniProtKB"/>
</dbReference>